<proteinExistence type="inferred from homology"/>
<organism>
    <name type="scientific">Thermotoga petrophila (strain ATCC BAA-488 / DSM 13995 / JCM 10881 / RKU-1)</name>
    <dbReference type="NCBI Taxonomy" id="390874"/>
    <lineage>
        <taxon>Bacteria</taxon>
        <taxon>Thermotogati</taxon>
        <taxon>Thermotogota</taxon>
        <taxon>Thermotogae</taxon>
        <taxon>Thermotogales</taxon>
        <taxon>Thermotogaceae</taxon>
        <taxon>Thermotoga</taxon>
    </lineage>
</organism>
<accession>A5IN94</accession>
<keyword id="KW-0068">Autocatalytic cleavage</keyword>
<keyword id="KW-0227">DNA damage</keyword>
<keyword id="KW-0234">DNA repair</keyword>
<keyword id="KW-0235">DNA replication</keyword>
<keyword id="KW-0238">DNA-binding</keyword>
<keyword id="KW-0378">Hydrolase</keyword>
<keyword id="KW-0678">Repressor</keyword>
<keyword id="KW-0742">SOS response</keyword>
<keyword id="KW-0804">Transcription</keyword>
<keyword id="KW-0805">Transcription regulation</keyword>
<comment type="function">
    <text evidence="1">Represses a number of genes involved in the response to DNA damage (SOS response), including recA and lexA. In the presence of single-stranded DNA, RecA interacts with LexA causing an autocatalytic cleavage which disrupts the DNA-binding part of LexA, leading to derepression of the SOS regulon and eventually DNA repair.</text>
</comment>
<comment type="catalytic activity">
    <reaction evidence="1">
        <text>Hydrolysis of Ala-|-Gly bond in repressor LexA.</text>
        <dbReference type="EC" id="3.4.21.88"/>
    </reaction>
</comment>
<comment type="subunit">
    <text evidence="1">Homodimer.</text>
</comment>
<comment type="similarity">
    <text evidence="1">Belongs to the peptidase S24 family.</text>
</comment>
<name>LEXA_THEP1</name>
<reference key="1">
    <citation type="submission" date="2007-05" db="EMBL/GenBank/DDBJ databases">
        <title>Complete sequence of Thermotoga petrophila RKU-1.</title>
        <authorList>
            <consortium name="US DOE Joint Genome Institute"/>
            <person name="Copeland A."/>
            <person name="Lucas S."/>
            <person name="Lapidus A."/>
            <person name="Barry K."/>
            <person name="Glavina del Rio T."/>
            <person name="Dalin E."/>
            <person name="Tice H."/>
            <person name="Pitluck S."/>
            <person name="Sims D."/>
            <person name="Brettin T."/>
            <person name="Bruce D."/>
            <person name="Detter J.C."/>
            <person name="Han C."/>
            <person name="Tapia R."/>
            <person name="Schmutz J."/>
            <person name="Larimer F."/>
            <person name="Land M."/>
            <person name="Hauser L."/>
            <person name="Kyrpides N."/>
            <person name="Mikhailova N."/>
            <person name="Nelson K."/>
            <person name="Gogarten J.P."/>
            <person name="Noll K."/>
            <person name="Richardson P."/>
        </authorList>
    </citation>
    <scope>NUCLEOTIDE SEQUENCE [LARGE SCALE GENOMIC DNA]</scope>
    <source>
        <strain>ATCC BAA-488 / DSM 13995 / JCM 10881 / RKU-1</strain>
    </source>
</reference>
<dbReference type="EC" id="3.4.21.88" evidence="1"/>
<dbReference type="EMBL" id="CP000702">
    <property type="protein sequence ID" value="ABQ47667.1"/>
    <property type="molecule type" value="Genomic_DNA"/>
</dbReference>
<dbReference type="RefSeq" id="WP_011944076.1">
    <property type="nucleotide sequence ID" value="NC_009486.1"/>
</dbReference>
<dbReference type="SMR" id="A5IN94"/>
<dbReference type="STRING" id="390874.Tpet_1662"/>
<dbReference type="MEROPS" id="S24.001"/>
<dbReference type="KEGG" id="tpt:Tpet_1662"/>
<dbReference type="eggNOG" id="COG1974">
    <property type="taxonomic scope" value="Bacteria"/>
</dbReference>
<dbReference type="HOGENOM" id="CLU_066192_45_1_0"/>
<dbReference type="Proteomes" id="UP000006558">
    <property type="component" value="Chromosome"/>
</dbReference>
<dbReference type="GO" id="GO:0003677">
    <property type="term" value="F:DNA binding"/>
    <property type="evidence" value="ECO:0007669"/>
    <property type="project" value="UniProtKB-UniRule"/>
</dbReference>
<dbReference type="GO" id="GO:0004252">
    <property type="term" value="F:serine-type endopeptidase activity"/>
    <property type="evidence" value="ECO:0007669"/>
    <property type="project" value="UniProtKB-UniRule"/>
</dbReference>
<dbReference type="GO" id="GO:0006281">
    <property type="term" value="P:DNA repair"/>
    <property type="evidence" value="ECO:0007669"/>
    <property type="project" value="UniProtKB-UniRule"/>
</dbReference>
<dbReference type="GO" id="GO:0006260">
    <property type="term" value="P:DNA replication"/>
    <property type="evidence" value="ECO:0007669"/>
    <property type="project" value="UniProtKB-UniRule"/>
</dbReference>
<dbReference type="GO" id="GO:0045892">
    <property type="term" value="P:negative regulation of DNA-templated transcription"/>
    <property type="evidence" value="ECO:0007669"/>
    <property type="project" value="UniProtKB-UniRule"/>
</dbReference>
<dbReference type="GO" id="GO:0006508">
    <property type="term" value="P:proteolysis"/>
    <property type="evidence" value="ECO:0007669"/>
    <property type="project" value="InterPro"/>
</dbReference>
<dbReference type="GO" id="GO:0009432">
    <property type="term" value="P:SOS response"/>
    <property type="evidence" value="ECO:0007669"/>
    <property type="project" value="UniProtKB-UniRule"/>
</dbReference>
<dbReference type="CDD" id="cd06529">
    <property type="entry name" value="S24_LexA-like"/>
    <property type="match status" value="1"/>
</dbReference>
<dbReference type="FunFam" id="2.10.109.10:FF:000001">
    <property type="entry name" value="LexA repressor"/>
    <property type="match status" value="1"/>
</dbReference>
<dbReference type="Gene3D" id="2.10.109.10">
    <property type="entry name" value="Umud Fragment, subunit A"/>
    <property type="match status" value="1"/>
</dbReference>
<dbReference type="Gene3D" id="1.10.10.10">
    <property type="entry name" value="Winged helix-like DNA-binding domain superfamily/Winged helix DNA-binding domain"/>
    <property type="match status" value="1"/>
</dbReference>
<dbReference type="HAMAP" id="MF_00015">
    <property type="entry name" value="LexA"/>
    <property type="match status" value="1"/>
</dbReference>
<dbReference type="InterPro" id="IPR006200">
    <property type="entry name" value="LexA"/>
</dbReference>
<dbReference type="InterPro" id="IPR039418">
    <property type="entry name" value="LexA-like"/>
</dbReference>
<dbReference type="InterPro" id="IPR036286">
    <property type="entry name" value="LexA/Signal_pep-like_sf"/>
</dbReference>
<dbReference type="InterPro" id="IPR006199">
    <property type="entry name" value="LexA_DNA-bd_dom"/>
</dbReference>
<dbReference type="InterPro" id="IPR050077">
    <property type="entry name" value="LexA_repressor"/>
</dbReference>
<dbReference type="InterPro" id="IPR006197">
    <property type="entry name" value="Peptidase_S24_LexA"/>
</dbReference>
<dbReference type="InterPro" id="IPR015927">
    <property type="entry name" value="Peptidase_S24_S26A/B/C"/>
</dbReference>
<dbReference type="InterPro" id="IPR036388">
    <property type="entry name" value="WH-like_DNA-bd_sf"/>
</dbReference>
<dbReference type="InterPro" id="IPR036390">
    <property type="entry name" value="WH_DNA-bd_sf"/>
</dbReference>
<dbReference type="NCBIfam" id="TIGR00498">
    <property type="entry name" value="lexA"/>
    <property type="match status" value="1"/>
</dbReference>
<dbReference type="PANTHER" id="PTHR33516">
    <property type="entry name" value="LEXA REPRESSOR"/>
    <property type="match status" value="1"/>
</dbReference>
<dbReference type="PANTHER" id="PTHR33516:SF2">
    <property type="entry name" value="LEXA REPRESSOR-RELATED"/>
    <property type="match status" value="1"/>
</dbReference>
<dbReference type="Pfam" id="PF01726">
    <property type="entry name" value="LexA_DNA_bind"/>
    <property type="match status" value="1"/>
</dbReference>
<dbReference type="Pfam" id="PF00717">
    <property type="entry name" value="Peptidase_S24"/>
    <property type="match status" value="1"/>
</dbReference>
<dbReference type="PRINTS" id="PR00726">
    <property type="entry name" value="LEXASERPTASE"/>
</dbReference>
<dbReference type="SUPFAM" id="SSF51306">
    <property type="entry name" value="LexA/Signal peptidase"/>
    <property type="match status" value="1"/>
</dbReference>
<dbReference type="SUPFAM" id="SSF46785">
    <property type="entry name" value="Winged helix' DNA-binding domain"/>
    <property type="match status" value="1"/>
</dbReference>
<gene>
    <name evidence="1" type="primary">lexA</name>
    <name type="ordered locus">Tpet_1662</name>
</gene>
<feature type="chain" id="PRO_1000001352" description="LexA repressor">
    <location>
        <begin position="1"/>
        <end position="197"/>
    </location>
</feature>
<feature type="DNA-binding region" description="H-T-H motif" evidence="1">
    <location>
        <begin position="28"/>
        <end position="47"/>
    </location>
</feature>
<feature type="active site" description="For autocatalytic cleavage activity" evidence="1">
    <location>
        <position position="119"/>
    </location>
</feature>
<feature type="active site" description="For autocatalytic cleavage activity" evidence="1">
    <location>
        <position position="156"/>
    </location>
</feature>
<feature type="site" description="Cleavage; by autolysis" evidence="1">
    <location>
        <begin position="83"/>
        <end position="84"/>
    </location>
</feature>
<evidence type="ECO:0000255" key="1">
    <source>
        <dbReference type="HAMAP-Rule" id="MF_00015"/>
    </source>
</evidence>
<protein>
    <recommendedName>
        <fullName evidence="1">LexA repressor</fullName>
        <ecNumber evidence="1">3.4.21.88</ecNumber>
    </recommendedName>
</protein>
<sequence length="197" mass="22836">MKDLTERQRKVLLFIEEFIEKNGYPPSVREIARRFRITPRGALLHLIALEKKGYIERKNGKPRALRVSKSIRNKIPLIGEIRAGEKREAVEYLEDYIEIPESFLSSGYDHFLLKVKGESMIEEHICDGDLVLVRRQDWAQNGDIVVAMVDGEVTLKKFYQRGDTVELRPANREMSSMFFKAEKVKILGKVVGVFRKL</sequence>